<proteinExistence type="evidence at protein level"/>
<accession>P86419</accession>
<comment type="function">
    <text evidence="2 3 4">Non-competitive antagonist of alpha-2 adrenergic receptors (ADRA2) in smooth muscles, and partial antagonist of D3 dopamine receptors (DRD3) (inhibits 25% of methylspiperone binding to this receptor) (PubMed:20659106). Also shows a low antagonism on D2 dopamine receptors (DRD2) (short isoform) (PubMed:24793485). Shows high affinity to adrenergic receptors (Ki=14 nM (ADRA2A), Ki=73 nM (ADRA2B), and Ki=38 nM (ADRA2C)) (PubMed:20659106). Increases heart rate and blood catecholamine concentrations (PubMed:21419153).</text>
</comment>
<comment type="subcellular location">
    <subcellularLocation>
        <location evidence="2">Secreted</location>
    </subcellularLocation>
</comment>
<comment type="tissue specificity">
    <text evidence="10">Expressed by the venom gland.</text>
</comment>
<comment type="mass spectrometry">
    <text>Monoisotopic mass.</text>
</comment>
<comment type="miscellaneous">
    <text evidence="4">Negative results: does not show interaction with adrenergic receptors (ADRA1A, ADRA1B, ADRA1D, ADRB1, ADRB2), dopaminergic receptors (DRD1, DRD2, DRD4, DRD5), histaminic receptors (HRH1, HRH3, HRH4), muscarinic receptors (CHRM1, CHRM2, CHRM3, CHRM4, CHRM5), and serotoninergic receptors (HTR1A, HTR2A, HTR2B, HTR2C, HTR5A, HTR6, HTR7).</text>
</comment>
<comment type="similarity">
    <text evidence="11">Belongs to the three-finger toxin family. Short-chain subfamily. Aminergic toxin sub-subfamily.</text>
</comment>
<sequence>LTCVTKDTIFGITTQNCPAGQNLCFIRRHYINHRYTEITRGCTATCPKPTNVRETIHCCNTDKCNE</sequence>
<reference key="1">
    <citation type="journal article" date="2010" name="Br. J. Pharmacol.">
        <title>Identification of a novel snake peptide toxin displaying high affinity and antagonist behaviour for the alpha2-adrenoceptors.</title>
        <authorList>
            <person name="Rouget C."/>
            <person name="Quinton L."/>
            <person name="Maiga A."/>
            <person name="Gales C."/>
            <person name="Masuyer G."/>
            <person name="Malosse C."/>
            <person name="Chamot-Rooke J."/>
            <person name="Thai R."/>
            <person name="Mourier G."/>
            <person name="De Pauw E."/>
            <person name="Gilles N."/>
            <person name="Servent D."/>
        </authorList>
    </citation>
    <scope>PROTEIN SEQUENCE</scope>
    <scope>SYNTHESIS</scope>
    <scope>FUNCTION</scope>
    <scope>SUBCELLULAR LOCATION</scope>
    <scope>MASS SPECTROMETRY</scope>
    <source>
        <tissue>Venom</tissue>
    </source>
</reference>
<reference key="2">
    <citation type="journal article" date="2012" name="Toxicon">
        <title>G protein-coupled receptors, an unexploited animal toxin targets: exploration of green mamba venom for novel drug candidates active against adrenoceptors.</title>
        <authorList>
            <person name="Maiga A."/>
            <person name="Mourier G."/>
            <person name="Quinton L."/>
            <person name="Rouget C."/>
            <person name="Gales C."/>
            <person name="Denis C."/>
            <person name="Lluel P."/>
            <person name="Senard J.M."/>
            <person name="Palea S."/>
            <person name="Servent D."/>
            <person name="Gilles N."/>
        </authorList>
    </citation>
    <scope>PROTEIN SEQUENCE</scope>
    <scope>FUNCTION</scope>
    <scope>SYNTHESIS</scope>
</reference>
<reference key="3">
    <citation type="journal article" date="2014" name="Biochimie">
        <title>Polypharmacology profiles and phylogenetic analysis of three-finger toxins from mamba venom: case of aminergic toxins.</title>
        <authorList>
            <person name="Blanchet G."/>
            <person name="Collet G."/>
            <person name="Mourier G."/>
            <person name="Gilles N."/>
            <person name="Fruchart-Gaillard C."/>
            <person name="Marcon E."/>
            <person name="Servent D."/>
        </authorList>
    </citation>
    <scope>SYNTHESIS</scope>
    <scope>FUNCTION</scope>
</reference>
<reference key="4">
    <citation type="journal article" date="2017" name="Sci. Rep.">
        <title>Ancestral protein resurrection and engineering opportunities of the mamba aminergic toxins.</title>
        <authorList>
            <person name="Blanchet G."/>
            <person name="Alili D."/>
            <person name="Protte A."/>
            <person name="Upert G."/>
            <person name="Gilles N."/>
            <person name="Tepshi L."/>
            <person name="Stura E.A."/>
            <person name="Mourier G."/>
            <person name="Servent D."/>
        </authorList>
    </citation>
    <scope>MUTAGENESIS OF ASP-7; GLN-15; ILE-26; ARG-28 AND THR-43</scope>
</reference>
<organism>
    <name type="scientific">Dendroaspis angusticeps</name>
    <name type="common">Eastern green mamba</name>
    <name type="synonym">Naja angusticeps</name>
    <dbReference type="NCBI Taxonomy" id="8618"/>
    <lineage>
        <taxon>Eukaryota</taxon>
        <taxon>Metazoa</taxon>
        <taxon>Chordata</taxon>
        <taxon>Craniata</taxon>
        <taxon>Vertebrata</taxon>
        <taxon>Euteleostomi</taxon>
        <taxon>Lepidosauria</taxon>
        <taxon>Squamata</taxon>
        <taxon>Bifurcata</taxon>
        <taxon>Unidentata</taxon>
        <taxon>Episquamata</taxon>
        <taxon>Toxicofera</taxon>
        <taxon>Serpentes</taxon>
        <taxon>Colubroidea</taxon>
        <taxon>Elapidae</taxon>
        <taxon>Elapinae</taxon>
        <taxon>Dendroaspis</taxon>
    </lineage>
</organism>
<feature type="chain" id="PRO_0000398129" description="Rho-elapitoxin-Da1b" evidence="2 3">
    <location>
        <begin position="1"/>
        <end position="66"/>
    </location>
</feature>
<feature type="disulfide bond" evidence="1">
    <location>
        <begin position="3"/>
        <end position="24"/>
    </location>
</feature>
<feature type="disulfide bond" evidence="1">
    <location>
        <begin position="17"/>
        <end position="42"/>
    </location>
</feature>
<feature type="disulfide bond" evidence="1">
    <location>
        <begin position="46"/>
        <end position="58"/>
    </location>
</feature>
<feature type="disulfide bond" evidence="1">
    <location>
        <begin position="59"/>
        <end position="64"/>
    </location>
</feature>
<feature type="mutagenesis site" description="In AncTx5; 3-4-fold increase in inhibition potency on alpha-2A adrenergic receptor and D3 dopamine receptor, 28-fold increase in inhibition potency on alpha-2B adrenergic receptor, and 10-fold increase in inhibition potency on ADRA2C adrenergic receptor; when associated with E-15; K-26; W-28 and A-43." evidence="5">
    <original>D</original>
    <variation>N</variation>
    <location>
        <position position="7"/>
    </location>
</feature>
<feature type="mutagenesis site" description="In AncTx5; 3-4-fold increase in inhibition potency on alpha-2A adrenergic receptor and D3 dopamine receptor, 28-fold increase in inhibition potency on alpha-2B adrenergic receptor, and 10-fold increase in inhibition potency on ADRA2C adrenergic receptor; when associated with N-7; K-26; W-28 and A-43." evidence="5">
    <original>Q</original>
    <variation>E</variation>
    <location>
        <position position="15"/>
    </location>
</feature>
<feature type="mutagenesis site" description="In AncTx5; 3-4-fold increase in inhibition potency on alpha-2A adrenergic receptor and D3 dopamine receptor, 28-fold increase in inhibition potency on alpha-2B adrenergic receptor, and 10-fold increase in inhibition potency on ADRA2C adrenergic receptor; when associated with N-7; E-15; W-28 and A-43." evidence="5">
    <original>I</original>
    <variation>K</variation>
    <location>
        <position position="26"/>
    </location>
</feature>
<feature type="mutagenesis site" description="In AncTx5; 3-4-fold increase in inhibition potency on alpha-2A adrenergic receptor and D3 dopamine receptor, 28-fold increase in inhibition potency on alpha-2B adrenergic receptor, and 10-fold increase in inhibition potency on ADRA2C adrenergic receptor; when associated with N-7; E-15; K-26 and A-43." evidence="5">
    <original>R</original>
    <variation>W</variation>
    <location>
        <position position="28"/>
    </location>
</feature>
<feature type="mutagenesis site" description="In AncTx5; 3-4-fold increase in inhibition potency on alpha-2A adrenergic receptor and D3 dopamine receptor, 28-fold increase in inhibition potency on alpha-2B adrenergic receptor, and 10-fold increase in inhibition potency on ADRA2C adrenergic receptor; when associated with N-7; E-15; K-26 and W-28." evidence="5">
    <original>T</original>
    <variation>A</variation>
    <location>
        <position position="43"/>
    </location>
</feature>
<protein>
    <recommendedName>
        <fullName evidence="9">Rho-elapitoxin-Da1b</fullName>
        <shortName evidence="6 7 8">Rho-Da1b</shortName>
        <shortName evidence="9">Rho-EPTX-Da1b</shortName>
    </recommendedName>
</protein>
<name>3SI1B_DENAN</name>
<keyword id="KW-0903">Direct protein sequencing</keyword>
<keyword id="KW-1015">Disulfide bond</keyword>
<keyword id="KW-1213">G-protein coupled receptor impairing toxin</keyword>
<keyword id="KW-0964">Secreted</keyword>
<keyword id="KW-0800">Toxin</keyword>
<evidence type="ECO:0000250" key="1">
    <source>
        <dbReference type="UniProtKB" id="Q8QGR0"/>
    </source>
</evidence>
<evidence type="ECO:0000269" key="2">
    <source>
    </source>
</evidence>
<evidence type="ECO:0000269" key="3">
    <source>
    </source>
</evidence>
<evidence type="ECO:0000269" key="4">
    <source>
    </source>
</evidence>
<evidence type="ECO:0000269" key="5">
    <source>
    </source>
</evidence>
<evidence type="ECO:0000303" key="6">
    <source>
    </source>
</evidence>
<evidence type="ECO:0000303" key="7">
    <source>
    </source>
</evidence>
<evidence type="ECO:0000303" key="8">
    <source>
    </source>
</evidence>
<evidence type="ECO:0000305" key="9"/>
<evidence type="ECO:0000305" key="10">
    <source>
    </source>
</evidence>
<evidence type="ECO:0000305" key="11">
    <source>
    </source>
</evidence>
<dbReference type="SMR" id="P86419"/>
<dbReference type="GO" id="GO:0005576">
    <property type="term" value="C:extracellular region"/>
    <property type="evidence" value="ECO:0007669"/>
    <property type="project" value="UniProtKB-SubCell"/>
</dbReference>
<dbReference type="GO" id="GO:0090729">
    <property type="term" value="F:toxin activity"/>
    <property type="evidence" value="ECO:0007669"/>
    <property type="project" value="UniProtKB-KW"/>
</dbReference>
<dbReference type="CDD" id="cd00206">
    <property type="entry name" value="TFP_snake_toxin"/>
    <property type="match status" value="1"/>
</dbReference>
<dbReference type="FunFam" id="2.10.60.10:FF:000024">
    <property type="entry name" value="Cytotoxin 1"/>
    <property type="match status" value="1"/>
</dbReference>
<dbReference type="Gene3D" id="2.10.60.10">
    <property type="entry name" value="CD59"/>
    <property type="match status" value="1"/>
</dbReference>
<dbReference type="InterPro" id="IPR003571">
    <property type="entry name" value="Snake_3FTx"/>
</dbReference>
<dbReference type="InterPro" id="IPR045860">
    <property type="entry name" value="Snake_toxin-like_sf"/>
</dbReference>
<dbReference type="InterPro" id="IPR018354">
    <property type="entry name" value="Snake_toxin_con_site"/>
</dbReference>
<dbReference type="InterPro" id="IPR054131">
    <property type="entry name" value="Toxin_cobra-type"/>
</dbReference>
<dbReference type="Pfam" id="PF21947">
    <property type="entry name" value="Toxin_cobra-type"/>
    <property type="match status" value="1"/>
</dbReference>
<dbReference type="SUPFAM" id="SSF57302">
    <property type="entry name" value="Snake toxin-like"/>
    <property type="match status" value="1"/>
</dbReference>
<dbReference type="PROSITE" id="PS00272">
    <property type="entry name" value="SNAKE_TOXIN"/>
    <property type="match status" value="1"/>
</dbReference>